<organism>
    <name type="scientific">Dinoroseobacter shibae (strain DSM 16493 / NCIMB 14021 / DFL 12)</name>
    <dbReference type="NCBI Taxonomy" id="398580"/>
    <lineage>
        <taxon>Bacteria</taxon>
        <taxon>Pseudomonadati</taxon>
        <taxon>Pseudomonadota</taxon>
        <taxon>Alphaproteobacteria</taxon>
        <taxon>Rhodobacterales</taxon>
        <taxon>Roseobacteraceae</taxon>
        <taxon>Dinoroseobacter</taxon>
    </lineage>
</organism>
<name>RNPH_DINSH</name>
<comment type="function">
    <text evidence="1">Phosphorolytic 3'-5' exoribonuclease that plays an important role in tRNA 3'-end maturation. Removes nucleotide residues following the 3'-CCA terminus of tRNAs; can also add nucleotides to the ends of RNA molecules by using nucleoside diphosphates as substrates, but this may not be physiologically important. Probably plays a role in initiation of 16S rRNA degradation (leading to ribosome degradation) during starvation.</text>
</comment>
<comment type="catalytic activity">
    <reaction evidence="1">
        <text>tRNA(n+1) + phosphate = tRNA(n) + a ribonucleoside 5'-diphosphate</text>
        <dbReference type="Rhea" id="RHEA:10628"/>
        <dbReference type="Rhea" id="RHEA-COMP:17343"/>
        <dbReference type="Rhea" id="RHEA-COMP:17344"/>
        <dbReference type="ChEBI" id="CHEBI:43474"/>
        <dbReference type="ChEBI" id="CHEBI:57930"/>
        <dbReference type="ChEBI" id="CHEBI:173114"/>
        <dbReference type="EC" id="2.7.7.56"/>
    </reaction>
</comment>
<comment type="subunit">
    <text evidence="1">Homohexameric ring arranged as a trimer of dimers.</text>
</comment>
<comment type="similarity">
    <text evidence="1">Belongs to the RNase PH family.</text>
</comment>
<reference key="1">
    <citation type="journal article" date="2010" name="ISME J.">
        <title>The complete genome sequence of the algal symbiont Dinoroseobacter shibae: a hitchhiker's guide to life in the sea.</title>
        <authorList>
            <person name="Wagner-Dobler I."/>
            <person name="Ballhausen B."/>
            <person name="Berger M."/>
            <person name="Brinkhoff T."/>
            <person name="Buchholz I."/>
            <person name="Bunk B."/>
            <person name="Cypionka H."/>
            <person name="Daniel R."/>
            <person name="Drepper T."/>
            <person name="Gerdts G."/>
            <person name="Hahnke S."/>
            <person name="Han C."/>
            <person name="Jahn D."/>
            <person name="Kalhoefer D."/>
            <person name="Kiss H."/>
            <person name="Klenk H.P."/>
            <person name="Kyrpides N."/>
            <person name="Liebl W."/>
            <person name="Liesegang H."/>
            <person name="Meincke L."/>
            <person name="Pati A."/>
            <person name="Petersen J."/>
            <person name="Piekarski T."/>
            <person name="Pommerenke C."/>
            <person name="Pradella S."/>
            <person name="Pukall R."/>
            <person name="Rabus R."/>
            <person name="Stackebrandt E."/>
            <person name="Thole S."/>
            <person name="Thompson L."/>
            <person name="Tielen P."/>
            <person name="Tomasch J."/>
            <person name="von Jan M."/>
            <person name="Wanphrut N."/>
            <person name="Wichels A."/>
            <person name="Zech H."/>
            <person name="Simon M."/>
        </authorList>
    </citation>
    <scope>NUCLEOTIDE SEQUENCE [LARGE SCALE GENOMIC DNA]</scope>
    <source>
        <strain>DSM 16493 / NCIMB 14021 / DFL 12</strain>
    </source>
</reference>
<feature type="chain" id="PRO_1000082290" description="Ribonuclease PH">
    <location>
        <begin position="1"/>
        <end position="237"/>
    </location>
</feature>
<feature type="binding site" evidence="1">
    <location>
        <position position="86"/>
    </location>
    <ligand>
        <name>phosphate</name>
        <dbReference type="ChEBI" id="CHEBI:43474"/>
        <note>substrate</note>
    </ligand>
</feature>
<feature type="binding site" evidence="1">
    <location>
        <begin position="124"/>
        <end position="126"/>
    </location>
    <ligand>
        <name>phosphate</name>
        <dbReference type="ChEBI" id="CHEBI:43474"/>
        <note>substrate</note>
    </ligand>
</feature>
<dbReference type="EC" id="2.7.7.56" evidence="1"/>
<dbReference type="EMBL" id="CP000830">
    <property type="protein sequence ID" value="ABV95196.1"/>
    <property type="molecule type" value="Genomic_DNA"/>
</dbReference>
<dbReference type="RefSeq" id="WP_012180120.1">
    <property type="nucleotide sequence ID" value="NC_009952.1"/>
</dbReference>
<dbReference type="SMR" id="A8LPD1"/>
<dbReference type="STRING" id="398580.Dshi_3463"/>
<dbReference type="KEGG" id="dsh:Dshi_3463"/>
<dbReference type="eggNOG" id="COG0689">
    <property type="taxonomic scope" value="Bacteria"/>
</dbReference>
<dbReference type="HOGENOM" id="CLU_050858_0_0_5"/>
<dbReference type="OrthoDB" id="9802265at2"/>
<dbReference type="Proteomes" id="UP000006833">
    <property type="component" value="Chromosome"/>
</dbReference>
<dbReference type="GO" id="GO:0000175">
    <property type="term" value="F:3'-5'-RNA exonuclease activity"/>
    <property type="evidence" value="ECO:0007669"/>
    <property type="project" value="UniProtKB-UniRule"/>
</dbReference>
<dbReference type="GO" id="GO:0000049">
    <property type="term" value="F:tRNA binding"/>
    <property type="evidence" value="ECO:0007669"/>
    <property type="project" value="UniProtKB-UniRule"/>
</dbReference>
<dbReference type="GO" id="GO:0009022">
    <property type="term" value="F:tRNA nucleotidyltransferase activity"/>
    <property type="evidence" value="ECO:0007669"/>
    <property type="project" value="UniProtKB-UniRule"/>
</dbReference>
<dbReference type="GO" id="GO:0016075">
    <property type="term" value="P:rRNA catabolic process"/>
    <property type="evidence" value="ECO:0007669"/>
    <property type="project" value="UniProtKB-UniRule"/>
</dbReference>
<dbReference type="GO" id="GO:0006364">
    <property type="term" value="P:rRNA processing"/>
    <property type="evidence" value="ECO:0007669"/>
    <property type="project" value="UniProtKB-KW"/>
</dbReference>
<dbReference type="GO" id="GO:0008033">
    <property type="term" value="P:tRNA processing"/>
    <property type="evidence" value="ECO:0007669"/>
    <property type="project" value="UniProtKB-UniRule"/>
</dbReference>
<dbReference type="CDD" id="cd11362">
    <property type="entry name" value="RNase_PH_bact"/>
    <property type="match status" value="1"/>
</dbReference>
<dbReference type="FunFam" id="3.30.230.70:FF:000003">
    <property type="entry name" value="Ribonuclease PH"/>
    <property type="match status" value="1"/>
</dbReference>
<dbReference type="Gene3D" id="3.30.230.70">
    <property type="entry name" value="GHMP Kinase, N-terminal domain"/>
    <property type="match status" value="1"/>
</dbReference>
<dbReference type="HAMAP" id="MF_00564">
    <property type="entry name" value="RNase_PH"/>
    <property type="match status" value="1"/>
</dbReference>
<dbReference type="InterPro" id="IPR001247">
    <property type="entry name" value="ExoRNase_PH_dom1"/>
</dbReference>
<dbReference type="InterPro" id="IPR015847">
    <property type="entry name" value="ExoRNase_PH_dom2"/>
</dbReference>
<dbReference type="InterPro" id="IPR036345">
    <property type="entry name" value="ExoRNase_PH_dom2_sf"/>
</dbReference>
<dbReference type="InterPro" id="IPR027408">
    <property type="entry name" value="PNPase/RNase_PH_dom_sf"/>
</dbReference>
<dbReference type="InterPro" id="IPR020568">
    <property type="entry name" value="Ribosomal_Su5_D2-typ_SF"/>
</dbReference>
<dbReference type="InterPro" id="IPR050080">
    <property type="entry name" value="RNase_PH"/>
</dbReference>
<dbReference type="InterPro" id="IPR002381">
    <property type="entry name" value="RNase_PH_bac-type"/>
</dbReference>
<dbReference type="InterPro" id="IPR018336">
    <property type="entry name" value="RNase_PH_CS"/>
</dbReference>
<dbReference type="NCBIfam" id="TIGR01966">
    <property type="entry name" value="RNasePH"/>
    <property type="match status" value="1"/>
</dbReference>
<dbReference type="PANTHER" id="PTHR11953">
    <property type="entry name" value="EXOSOME COMPLEX COMPONENT"/>
    <property type="match status" value="1"/>
</dbReference>
<dbReference type="PANTHER" id="PTHR11953:SF0">
    <property type="entry name" value="EXOSOME COMPLEX COMPONENT RRP41"/>
    <property type="match status" value="1"/>
</dbReference>
<dbReference type="Pfam" id="PF01138">
    <property type="entry name" value="RNase_PH"/>
    <property type="match status" value="1"/>
</dbReference>
<dbReference type="Pfam" id="PF03725">
    <property type="entry name" value="RNase_PH_C"/>
    <property type="match status" value="1"/>
</dbReference>
<dbReference type="SUPFAM" id="SSF55666">
    <property type="entry name" value="Ribonuclease PH domain 2-like"/>
    <property type="match status" value="1"/>
</dbReference>
<dbReference type="SUPFAM" id="SSF54211">
    <property type="entry name" value="Ribosomal protein S5 domain 2-like"/>
    <property type="match status" value="1"/>
</dbReference>
<dbReference type="PROSITE" id="PS01277">
    <property type="entry name" value="RIBONUCLEASE_PH"/>
    <property type="match status" value="1"/>
</dbReference>
<keyword id="KW-0548">Nucleotidyltransferase</keyword>
<keyword id="KW-1185">Reference proteome</keyword>
<keyword id="KW-0694">RNA-binding</keyword>
<keyword id="KW-0698">rRNA processing</keyword>
<keyword id="KW-0808">Transferase</keyword>
<keyword id="KW-0819">tRNA processing</keyword>
<keyword id="KW-0820">tRNA-binding</keyword>
<sequence>MRPSGRQTHEMRGVSIETGFTRHAEGSCLISMGETRVLCTASVEERVPPFLRNTGLGWVTAEYGMLPRATHTRGRREAAAGKQSGRTQEIQRLIGRSLRAGVDRVALGERQITIDCDVIQADGGTRCASITGAWVALRLAVNKLMKAGDIITDPLTDHVAAVSCGLYAGQPVLDLDYAEDSEAGTDANFVMTGSGGLIEVQGSAEGAPFSRNALNTLMDLAEVGVAELVAAQKAATS</sequence>
<proteinExistence type="inferred from homology"/>
<protein>
    <recommendedName>
        <fullName evidence="1">Ribonuclease PH</fullName>
        <shortName evidence="1">RNase PH</shortName>
        <ecNumber evidence="1">2.7.7.56</ecNumber>
    </recommendedName>
    <alternativeName>
        <fullName evidence="1">tRNA nucleotidyltransferase</fullName>
    </alternativeName>
</protein>
<accession>A8LPD1</accession>
<gene>
    <name evidence="1" type="primary">rph</name>
    <name type="ordered locus">Dshi_3463</name>
</gene>
<evidence type="ECO:0000255" key="1">
    <source>
        <dbReference type="HAMAP-Rule" id="MF_00564"/>
    </source>
</evidence>